<organism>
    <name type="scientific">Mycolicibacterium smegmatis (strain ATCC 700084 / mc(2)155)</name>
    <name type="common">Mycobacterium smegmatis</name>
    <dbReference type="NCBI Taxonomy" id="246196"/>
    <lineage>
        <taxon>Bacteria</taxon>
        <taxon>Bacillati</taxon>
        <taxon>Actinomycetota</taxon>
        <taxon>Actinomycetes</taxon>
        <taxon>Mycobacteriales</taxon>
        <taxon>Mycobacteriaceae</taxon>
        <taxon>Mycolicibacterium</taxon>
    </lineage>
</organism>
<protein>
    <recommendedName>
        <fullName evidence="1">Large ribosomal subunit protein bL17</fullName>
    </recommendedName>
    <alternativeName>
        <fullName evidence="3">50S ribosomal protein L17</fullName>
    </alternativeName>
</protein>
<name>RL17_MYCS2</name>
<evidence type="ECO:0000255" key="1">
    <source>
        <dbReference type="HAMAP-Rule" id="MF_01368"/>
    </source>
</evidence>
<evidence type="ECO:0000256" key="2">
    <source>
        <dbReference type="SAM" id="MobiDB-lite"/>
    </source>
</evidence>
<evidence type="ECO:0000305" key="3"/>
<evidence type="ECO:0007829" key="4">
    <source>
        <dbReference type="PDB" id="5O60"/>
    </source>
</evidence>
<evidence type="ECO:0007829" key="5">
    <source>
        <dbReference type="PDB" id="5XYM"/>
    </source>
</evidence>
<evidence type="ECO:0007829" key="6">
    <source>
        <dbReference type="PDB" id="5ZET"/>
    </source>
</evidence>
<keyword id="KW-0002">3D-structure</keyword>
<keyword id="KW-1185">Reference proteome</keyword>
<keyword id="KW-0687">Ribonucleoprotein</keyword>
<keyword id="KW-0689">Ribosomal protein</keyword>
<gene>
    <name evidence="1" type="primary">rplQ</name>
    <name type="ordered locus">MSMEG_1525</name>
    <name type="ordered locus">MSMEI_1489</name>
</gene>
<dbReference type="EMBL" id="CP000480">
    <property type="protein sequence ID" value="ABK73583.1"/>
    <property type="molecule type" value="Genomic_DNA"/>
</dbReference>
<dbReference type="EMBL" id="CP001663">
    <property type="protein sequence ID" value="AFP37962.1"/>
    <property type="molecule type" value="Genomic_DNA"/>
</dbReference>
<dbReference type="RefSeq" id="WP_011727719.1">
    <property type="nucleotide sequence ID" value="NZ_SIJM01000016.1"/>
</dbReference>
<dbReference type="RefSeq" id="YP_885907.1">
    <property type="nucleotide sequence ID" value="NC_008596.1"/>
</dbReference>
<dbReference type="PDB" id="5O60">
    <property type="method" value="EM"/>
    <property type="resolution" value="3.20 A"/>
    <property type="chains" value="O=1-199"/>
</dbReference>
<dbReference type="PDB" id="5O61">
    <property type="method" value="EM"/>
    <property type="resolution" value="3.31 A"/>
    <property type="chains" value="O=1-199"/>
</dbReference>
<dbReference type="PDB" id="5XYM">
    <property type="method" value="EM"/>
    <property type="resolution" value="3.08 A"/>
    <property type="chains" value="N=1-199"/>
</dbReference>
<dbReference type="PDB" id="5ZEB">
    <property type="method" value="EM"/>
    <property type="resolution" value="3.40 A"/>
    <property type="chains" value="O=1-199"/>
</dbReference>
<dbReference type="PDB" id="5ZEP">
    <property type="method" value="EM"/>
    <property type="resolution" value="3.40 A"/>
    <property type="chains" value="O=1-199"/>
</dbReference>
<dbReference type="PDB" id="5ZET">
    <property type="method" value="EM"/>
    <property type="resolution" value="3.20 A"/>
    <property type="chains" value="O=1-199"/>
</dbReference>
<dbReference type="PDB" id="6DZI">
    <property type="method" value="EM"/>
    <property type="resolution" value="3.46 A"/>
    <property type="chains" value="O=2-119"/>
</dbReference>
<dbReference type="PDB" id="6DZP">
    <property type="method" value="EM"/>
    <property type="resolution" value="3.42 A"/>
    <property type="chains" value="O=1-199"/>
</dbReference>
<dbReference type="PDB" id="7S0S">
    <property type="method" value="EM"/>
    <property type="resolution" value="3.05 A"/>
    <property type="chains" value="P=2-119"/>
</dbReference>
<dbReference type="PDB" id="7XAM">
    <property type="method" value="EM"/>
    <property type="resolution" value="2.80 A"/>
    <property type="chains" value="O=1-199"/>
</dbReference>
<dbReference type="PDB" id="7Y41">
    <property type="method" value="EM"/>
    <property type="resolution" value="4.10 A"/>
    <property type="chains" value="O=1-199"/>
</dbReference>
<dbReference type="PDB" id="8FR8">
    <property type="method" value="EM"/>
    <property type="resolution" value="2.76 A"/>
    <property type="chains" value="J=2-119"/>
</dbReference>
<dbReference type="PDB" id="8KAB">
    <property type="method" value="EM"/>
    <property type="resolution" value="3.30 A"/>
    <property type="chains" value="O=1-199"/>
</dbReference>
<dbReference type="PDB" id="8V9J">
    <property type="method" value="EM"/>
    <property type="resolution" value="3.10 A"/>
    <property type="chains" value="P=1-199"/>
</dbReference>
<dbReference type="PDB" id="8V9K">
    <property type="method" value="EM"/>
    <property type="resolution" value="3.10 A"/>
    <property type="chains" value="P=1-199"/>
</dbReference>
<dbReference type="PDB" id="8V9L">
    <property type="method" value="EM"/>
    <property type="resolution" value="3.00 A"/>
    <property type="chains" value="P=1-199"/>
</dbReference>
<dbReference type="PDB" id="8VIO">
    <property type="method" value="EM"/>
    <property type="resolution" value="3.26 A"/>
    <property type="chains" value="O=1-199"/>
</dbReference>
<dbReference type="PDB" id="8VK0">
    <property type="method" value="EM"/>
    <property type="resolution" value="3.14 A"/>
    <property type="chains" value="O=1-199"/>
</dbReference>
<dbReference type="PDB" id="8VK7">
    <property type="method" value="EM"/>
    <property type="resolution" value="3.09 A"/>
    <property type="chains" value="O=1-199"/>
</dbReference>
<dbReference type="PDB" id="8VKI">
    <property type="method" value="EM"/>
    <property type="resolution" value="2.96 A"/>
    <property type="chains" value="O=1-199"/>
</dbReference>
<dbReference type="PDB" id="8VKW">
    <property type="method" value="EM"/>
    <property type="resolution" value="3.44 A"/>
    <property type="chains" value="O=1-199"/>
</dbReference>
<dbReference type="PDB" id="8VR4">
    <property type="method" value="EM"/>
    <property type="resolution" value="2.80 A"/>
    <property type="chains" value="O=1-199"/>
</dbReference>
<dbReference type="PDB" id="8VR8">
    <property type="method" value="EM"/>
    <property type="resolution" value="3.25 A"/>
    <property type="chains" value="O=1-199"/>
</dbReference>
<dbReference type="PDB" id="8VRL">
    <property type="method" value="EM"/>
    <property type="resolution" value="3.33 A"/>
    <property type="chains" value="O=1-199"/>
</dbReference>
<dbReference type="PDB" id="8WHX">
    <property type="method" value="EM"/>
    <property type="resolution" value="2.80 A"/>
    <property type="chains" value="Q=1-199"/>
</dbReference>
<dbReference type="PDB" id="8WHY">
    <property type="method" value="EM"/>
    <property type="resolution" value="2.70 A"/>
    <property type="chains" value="Q=1-199"/>
</dbReference>
<dbReference type="PDB" id="8WI7">
    <property type="method" value="EM"/>
    <property type="resolution" value="3.50 A"/>
    <property type="chains" value="Q=1-199"/>
</dbReference>
<dbReference type="PDB" id="8WI8">
    <property type="method" value="EM"/>
    <property type="resolution" value="2.70 A"/>
    <property type="chains" value="Q=1-199"/>
</dbReference>
<dbReference type="PDB" id="8WIB">
    <property type="method" value="EM"/>
    <property type="resolution" value="3.50 A"/>
    <property type="chains" value="Q=1-199"/>
</dbReference>
<dbReference type="PDB" id="8WIC">
    <property type="method" value="EM"/>
    <property type="resolution" value="3.50 A"/>
    <property type="chains" value="Q=1-199"/>
</dbReference>
<dbReference type="PDB" id="8XZ3">
    <property type="method" value="EM"/>
    <property type="resolution" value="3.60 A"/>
    <property type="chains" value="O=2-119"/>
</dbReference>
<dbReference type="PDBsum" id="5O60"/>
<dbReference type="PDBsum" id="5O61"/>
<dbReference type="PDBsum" id="5XYM"/>
<dbReference type="PDBsum" id="5ZEB"/>
<dbReference type="PDBsum" id="5ZEP"/>
<dbReference type="PDBsum" id="5ZET"/>
<dbReference type="PDBsum" id="6DZI"/>
<dbReference type="PDBsum" id="6DZP"/>
<dbReference type="PDBsum" id="7S0S"/>
<dbReference type="PDBsum" id="7XAM"/>
<dbReference type="PDBsum" id="7Y41"/>
<dbReference type="PDBsum" id="8FR8"/>
<dbReference type="PDBsum" id="8KAB"/>
<dbReference type="PDBsum" id="8V9J"/>
<dbReference type="PDBsum" id="8V9K"/>
<dbReference type="PDBsum" id="8V9L"/>
<dbReference type="PDBsum" id="8VIO"/>
<dbReference type="PDBsum" id="8VK0"/>
<dbReference type="PDBsum" id="8VK7"/>
<dbReference type="PDBsum" id="8VKI"/>
<dbReference type="PDBsum" id="8VKW"/>
<dbReference type="PDBsum" id="8VR4"/>
<dbReference type="PDBsum" id="8VR8"/>
<dbReference type="PDBsum" id="8VRL"/>
<dbReference type="PDBsum" id="8WHX"/>
<dbReference type="PDBsum" id="8WHY"/>
<dbReference type="PDBsum" id="8WI7"/>
<dbReference type="PDBsum" id="8WI8"/>
<dbReference type="PDBsum" id="8WIB"/>
<dbReference type="PDBsum" id="8WIC"/>
<dbReference type="PDBsum" id="8XZ3"/>
<dbReference type="EMDB" id="EMD-29397"/>
<dbReference type="EMDB" id="EMD-33096"/>
<dbReference type="EMDB" id="EMD-33599"/>
<dbReference type="EMDB" id="EMD-37007"/>
<dbReference type="EMDB" id="EMD-3750"/>
<dbReference type="EMDB" id="EMD-3751"/>
<dbReference type="EMDB" id="EMD-37551"/>
<dbReference type="EMDB" id="EMD-37552"/>
<dbReference type="EMDB" id="EMD-37559"/>
<dbReference type="EMDB" id="EMD-37560"/>
<dbReference type="EMDB" id="EMD-37562"/>
<dbReference type="EMDB" id="EMD-37563"/>
<dbReference type="EMDB" id="EMD-38788"/>
<dbReference type="EMDB" id="EMD-43074"/>
<dbReference type="EMDB" id="EMD-43075"/>
<dbReference type="EMDB" id="EMD-43076"/>
<dbReference type="EMDB" id="EMD-43267"/>
<dbReference type="EMDB" id="EMD-43294"/>
<dbReference type="EMDB" id="EMD-43305"/>
<dbReference type="EMDB" id="EMD-43317"/>
<dbReference type="EMDB" id="EMD-43333"/>
<dbReference type="EMDB" id="EMD-43476"/>
<dbReference type="EMDB" id="EMD-43477"/>
<dbReference type="EMDB" id="EMD-43484"/>
<dbReference type="EMDB" id="EMD-6789"/>
<dbReference type="EMDB" id="EMD-6920"/>
<dbReference type="EMDB" id="EMD-6921"/>
<dbReference type="EMDB" id="EMD-6922"/>
<dbReference type="EMDB" id="EMD-8932"/>
<dbReference type="EMDB" id="EMD-8937"/>
<dbReference type="SMR" id="A0QSL9"/>
<dbReference type="IntAct" id="A0QSL9">
    <property type="interactions" value="2"/>
</dbReference>
<dbReference type="STRING" id="246196.MSMEG_1525"/>
<dbReference type="PaxDb" id="246196-MSMEI_1489"/>
<dbReference type="GeneID" id="93456367"/>
<dbReference type="KEGG" id="msb:LJ00_07620"/>
<dbReference type="KEGG" id="msg:MSMEI_1489"/>
<dbReference type="KEGG" id="msm:MSMEG_1525"/>
<dbReference type="PATRIC" id="fig|246196.19.peg.1510"/>
<dbReference type="eggNOG" id="COG0203">
    <property type="taxonomic scope" value="Bacteria"/>
</dbReference>
<dbReference type="OrthoDB" id="9809073at2"/>
<dbReference type="Proteomes" id="UP000000757">
    <property type="component" value="Chromosome"/>
</dbReference>
<dbReference type="Proteomes" id="UP000006158">
    <property type="component" value="Chromosome"/>
</dbReference>
<dbReference type="GO" id="GO:0022625">
    <property type="term" value="C:cytosolic large ribosomal subunit"/>
    <property type="evidence" value="ECO:0007669"/>
    <property type="project" value="TreeGrafter"/>
</dbReference>
<dbReference type="GO" id="GO:0003735">
    <property type="term" value="F:structural constituent of ribosome"/>
    <property type="evidence" value="ECO:0007669"/>
    <property type="project" value="InterPro"/>
</dbReference>
<dbReference type="GO" id="GO:0006412">
    <property type="term" value="P:translation"/>
    <property type="evidence" value="ECO:0007669"/>
    <property type="project" value="UniProtKB-UniRule"/>
</dbReference>
<dbReference type="FunFam" id="3.90.1030.10:FF:000001">
    <property type="entry name" value="50S ribosomal protein L17"/>
    <property type="match status" value="1"/>
</dbReference>
<dbReference type="Gene3D" id="3.90.1030.10">
    <property type="entry name" value="Ribosomal protein L17"/>
    <property type="match status" value="1"/>
</dbReference>
<dbReference type="HAMAP" id="MF_01368">
    <property type="entry name" value="Ribosomal_bL17"/>
    <property type="match status" value="1"/>
</dbReference>
<dbReference type="InterPro" id="IPR000456">
    <property type="entry name" value="Ribosomal_bL17"/>
</dbReference>
<dbReference type="InterPro" id="IPR047859">
    <property type="entry name" value="Ribosomal_bL17_CS"/>
</dbReference>
<dbReference type="InterPro" id="IPR036373">
    <property type="entry name" value="Ribosomal_bL17_sf"/>
</dbReference>
<dbReference type="NCBIfam" id="TIGR00059">
    <property type="entry name" value="L17"/>
    <property type="match status" value="1"/>
</dbReference>
<dbReference type="PANTHER" id="PTHR14413:SF16">
    <property type="entry name" value="LARGE RIBOSOMAL SUBUNIT PROTEIN BL17M"/>
    <property type="match status" value="1"/>
</dbReference>
<dbReference type="PANTHER" id="PTHR14413">
    <property type="entry name" value="RIBOSOMAL PROTEIN L17"/>
    <property type="match status" value="1"/>
</dbReference>
<dbReference type="Pfam" id="PF01196">
    <property type="entry name" value="Ribosomal_L17"/>
    <property type="match status" value="1"/>
</dbReference>
<dbReference type="SUPFAM" id="SSF64263">
    <property type="entry name" value="Prokaryotic ribosomal protein L17"/>
    <property type="match status" value="1"/>
</dbReference>
<dbReference type="PROSITE" id="PS01167">
    <property type="entry name" value="RIBOSOMAL_L17"/>
    <property type="match status" value="1"/>
</dbReference>
<sequence length="199" mass="21854">MPKPTKGPRLGGSSSHQSALLANLATSLFEHGRIKTTEPKARALRPYAEKLITHAKKGALHNRREVMKKIRDKDVVHTLFAEIGPFYADRNGGYTRIIKVENRKGDNAPMAVIELVREKTVTDEANRARRAAASQAKADERADEKADEKAEETVEETTEAPAEESTEAAAEETVEETTEAPAEESTEAAEESEAKDDTK</sequence>
<proteinExistence type="evidence at protein level"/>
<accession>A0QSL9</accession>
<accession>I7FYD0</accession>
<comment type="subunit">
    <text evidence="1">Part of the 50S ribosomal subunit. Contacts protein L32.</text>
</comment>
<comment type="similarity">
    <text evidence="1">Belongs to the bacterial ribosomal protein bL17 family.</text>
</comment>
<reference key="1">
    <citation type="submission" date="2006-10" db="EMBL/GenBank/DDBJ databases">
        <authorList>
            <person name="Fleischmann R.D."/>
            <person name="Dodson R.J."/>
            <person name="Haft D.H."/>
            <person name="Merkel J.S."/>
            <person name="Nelson W.C."/>
            <person name="Fraser C.M."/>
        </authorList>
    </citation>
    <scope>NUCLEOTIDE SEQUENCE [LARGE SCALE GENOMIC DNA]</scope>
    <source>
        <strain>ATCC 700084 / mc(2)155</strain>
    </source>
</reference>
<reference key="2">
    <citation type="journal article" date="2007" name="Genome Biol.">
        <title>Interrupted coding sequences in Mycobacterium smegmatis: authentic mutations or sequencing errors?</title>
        <authorList>
            <person name="Deshayes C."/>
            <person name="Perrodou E."/>
            <person name="Gallien S."/>
            <person name="Euphrasie D."/>
            <person name="Schaeffer C."/>
            <person name="Van-Dorsselaer A."/>
            <person name="Poch O."/>
            <person name="Lecompte O."/>
            <person name="Reyrat J.-M."/>
        </authorList>
    </citation>
    <scope>NUCLEOTIDE SEQUENCE [LARGE SCALE GENOMIC DNA]</scope>
    <source>
        <strain>ATCC 700084 / mc(2)155</strain>
    </source>
</reference>
<reference key="3">
    <citation type="journal article" date="2009" name="Genome Res.">
        <title>Ortho-proteogenomics: multiple proteomes investigation through orthology and a new MS-based protocol.</title>
        <authorList>
            <person name="Gallien S."/>
            <person name="Perrodou E."/>
            <person name="Carapito C."/>
            <person name="Deshayes C."/>
            <person name="Reyrat J.-M."/>
            <person name="Van Dorsselaer A."/>
            <person name="Poch O."/>
            <person name="Schaeffer C."/>
            <person name="Lecompte O."/>
        </authorList>
    </citation>
    <scope>NUCLEOTIDE SEQUENCE [LARGE SCALE GENOMIC DNA]</scope>
    <scope>IDENTIFICATION BY MASS SPECTROMETRY [LARGE SCALE ANALYSIS]</scope>
    <source>
        <strain>ATCC 700084 / mc(2)155</strain>
    </source>
</reference>
<feature type="chain" id="PRO_1000055881" description="Large ribosomal subunit protein bL17">
    <location>
        <begin position="1"/>
        <end position="199"/>
    </location>
</feature>
<feature type="region of interest" description="Disordered" evidence="2">
    <location>
        <begin position="123"/>
        <end position="199"/>
    </location>
</feature>
<feature type="compositionally biased region" description="Basic and acidic residues" evidence="2">
    <location>
        <begin position="137"/>
        <end position="152"/>
    </location>
</feature>
<feature type="compositionally biased region" description="Acidic residues" evidence="2">
    <location>
        <begin position="153"/>
        <end position="199"/>
    </location>
</feature>
<feature type="strand" evidence="5">
    <location>
        <begin position="6"/>
        <end position="8"/>
    </location>
</feature>
<feature type="strand" evidence="6">
    <location>
        <begin position="10"/>
        <end position="13"/>
    </location>
</feature>
<feature type="helix" evidence="5">
    <location>
        <begin position="14"/>
        <end position="31"/>
    </location>
</feature>
<feature type="strand" evidence="5">
    <location>
        <begin position="32"/>
        <end position="37"/>
    </location>
</feature>
<feature type="helix" evidence="5">
    <location>
        <begin position="38"/>
        <end position="56"/>
    </location>
</feature>
<feature type="helix" evidence="5">
    <location>
        <begin position="60"/>
        <end position="67"/>
    </location>
</feature>
<feature type="helix" evidence="5">
    <location>
        <begin position="73"/>
        <end position="81"/>
    </location>
</feature>
<feature type="helix" evidence="5">
    <location>
        <begin position="83"/>
        <end position="86"/>
    </location>
</feature>
<feature type="turn" evidence="4">
    <location>
        <begin position="87"/>
        <end position="89"/>
    </location>
</feature>
<feature type="strand" evidence="5">
    <location>
        <begin position="95"/>
        <end position="102"/>
    </location>
</feature>
<feature type="turn" evidence="5">
    <location>
        <begin position="104"/>
        <end position="106"/>
    </location>
</feature>
<feature type="strand" evidence="5">
    <location>
        <begin position="109"/>
        <end position="115"/>
    </location>
</feature>